<dbReference type="EC" id="2.3.1.181" evidence="1"/>
<dbReference type="EMBL" id="CP001612">
    <property type="protein sequence ID" value="ACP54008.1"/>
    <property type="molecule type" value="Genomic_DNA"/>
</dbReference>
<dbReference type="RefSeq" id="WP_012720118.1">
    <property type="nucleotide sequence ID" value="NC_012633.1"/>
</dbReference>
<dbReference type="SMR" id="C3PM18"/>
<dbReference type="KEGG" id="raf:RAF_ORF1243"/>
<dbReference type="HOGENOM" id="CLU_035168_3_0_5"/>
<dbReference type="UniPathway" id="UPA00538">
    <property type="reaction ID" value="UER00592"/>
</dbReference>
<dbReference type="Proteomes" id="UP000002305">
    <property type="component" value="Chromosome"/>
</dbReference>
<dbReference type="GO" id="GO:0005737">
    <property type="term" value="C:cytoplasm"/>
    <property type="evidence" value="ECO:0007669"/>
    <property type="project" value="UniProtKB-SubCell"/>
</dbReference>
<dbReference type="GO" id="GO:0033819">
    <property type="term" value="F:lipoyl(octanoyl) transferase activity"/>
    <property type="evidence" value="ECO:0007669"/>
    <property type="project" value="UniProtKB-EC"/>
</dbReference>
<dbReference type="GO" id="GO:0036211">
    <property type="term" value="P:protein modification process"/>
    <property type="evidence" value="ECO:0007669"/>
    <property type="project" value="InterPro"/>
</dbReference>
<dbReference type="CDD" id="cd16444">
    <property type="entry name" value="LipB"/>
    <property type="match status" value="1"/>
</dbReference>
<dbReference type="Gene3D" id="3.30.930.10">
    <property type="entry name" value="Bira Bifunctional Protein, Domain 2"/>
    <property type="match status" value="1"/>
</dbReference>
<dbReference type="HAMAP" id="MF_00013">
    <property type="entry name" value="LipB"/>
    <property type="match status" value="1"/>
</dbReference>
<dbReference type="InterPro" id="IPR045864">
    <property type="entry name" value="aa-tRNA-synth_II/BPL/LPL"/>
</dbReference>
<dbReference type="InterPro" id="IPR004143">
    <property type="entry name" value="BPL_LPL_catalytic"/>
</dbReference>
<dbReference type="InterPro" id="IPR000544">
    <property type="entry name" value="Octanoyltransferase"/>
</dbReference>
<dbReference type="InterPro" id="IPR020605">
    <property type="entry name" value="Octanoyltransferase_CS"/>
</dbReference>
<dbReference type="NCBIfam" id="TIGR00214">
    <property type="entry name" value="lipB"/>
    <property type="match status" value="1"/>
</dbReference>
<dbReference type="NCBIfam" id="NF010921">
    <property type="entry name" value="PRK14341.1"/>
    <property type="match status" value="1"/>
</dbReference>
<dbReference type="NCBIfam" id="NF010925">
    <property type="entry name" value="PRK14345.1"/>
    <property type="match status" value="1"/>
</dbReference>
<dbReference type="PANTHER" id="PTHR10993:SF7">
    <property type="entry name" value="LIPOYLTRANSFERASE 2, MITOCHONDRIAL-RELATED"/>
    <property type="match status" value="1"/>
</dbReference>
<dbReference type="PANTHER" id="PTHR10993">
    <property type="entry name" value="OCTANOYLTRANSFERASE"/>
    <property type="match status" value="1"/>
</dbReference>
<dbReference type="Pfam" id="PF21948">
    <property type="entry name" value="LplA-B_cat"/>
    <property type="match status" value="1"/>
</dbReference>
<dbReference type="PIRSF" id="PIRSF016262">
    <property type="entry name" value="LPLase"/>
    <property type="match status" value="1"/>
</dbReference>
<dbReference type="SUPFAM" id="SSF55681">
    <property type="entry name" value="Class II aaRS and biotin synthetases"/>
    <property type="match status" value="1"/>
</dbReference>
<dbReference type="PROSITE" id="PS51733">
    <property type="entry name" value="BPL_LPL_CATALYTIC"/>
    <property type="match status" value="1"/>
</dbReference>
<dbReference type="PROSITE" id="PS01313">
    <property type="entry name" value="LIPB"/>
    <property type="match status" value="1"/>
</dbReference>
<accession>C3PM18</accession>
<sequence length="209" mass="24119">MIRFITIPDFADYQVTLKLMEDYVNKVISDHEPEIIYLVEHLEVYTAGTNYKQEELLNYGDIPVIYTGRGGKFTFHGPGQRVIYPILNLASPNRHKDLKLYIKMLEEWIINSLNYFGIKAYIIKDKVGIWVKVRKDEFAKIAAIGVRVRKWVTYHGVAINISTDLSKFSGIIPCGLENSLVTSLNQLGIHVEMSEFDKIIQTEFNKIFK</sequence>
<keyword id="KW-0012">Acyltransferase</keyword>
<keyword id="KW-0963">Cytoplasm</keyword>
<keyword id="KW-0808">Transferase</keyword>
<comment type="function">
    <text evidence="1">Catalyzes the transfer of endogenously produced octanoic acid from octanoyl-acyl-carrier-protein onto the lipoyl domains of lipoate-dependent enzymes. Lipoyl-ACP can also act as a substrate although octanoyl-ACP is likely to be the physiological substrate.</text>
</comment>
<comment type="catalytic activity">
    <reaction evidence="1">
        <text>octanoyl-[ACP] + L-lysyl-[protein] = N(6)-octanoyl-L-lysyl-[protein] + holo-[ACP] + H(+)</text>
        <dbReference type="Rhea" id="RHEA:17665"/>
        <dbReference type="Rhea" id="RHEA-COMP:9636"/>
        <dbReference type="Rhea" id="RHEA-COMP:9685"/>
        <dbReference type="Rhea" id="RHEA-COMP:9752"/>
        <dbReference type="Rhea" id="RHEA-COMP:9928"/>
        <dbReference type="ChEBI" id="CHEBI:15378"/>
        <dbReference type="ChEBI" id="CHEBI:29969"/>
        <dbReference type="ChEBI" id="CHEBI:64479"/>
        <dbReference type="ChEBI" id="CHEBI:78463"/>
        <dbReference type="ChEBI" id="CHEBI:78809"/>
        <dbReference type="EC" id="2.3.1.181"/>
    </reaction>
</comment>
<comment type="pathway">
    <text evidence="1">Protein modification; protein lipoylation via endogenous pathway; protein N(6)-(lipoyl)lysine from octanoyl-[acyl-carrier-protein]: step 1/2.</text>
</comment>
<comment type="subcellular location">
    <subcellularLocation>
        <location evidence="1">Cytoplasm</location>
    </subcellularLocation>
</comment>
<comment type="miscellaneous">
    <text evidence="1">In the reaction, the free carboxyl group of octanoic acid is attached via an amide linkage to the epsilon-amino group of a specific lysine residue of lipoyl domains of lipoate-dependent enzymes.</text>
</comment>
<comment type="similarity">
    <text evidence="1">Belongs to the LipB family.</text>
</comment>
<feature type="chain" id="PRO_1000201801" description="Octanoyltransferase">
    <location>
        <begin position="1"/>
        <end position="209"/>
    </location>
</feature>
<feature type="domain" description="BPL/LPL catalytic" evidence="2">
    <location>
        <begin position="30"/>
        <end position="209"/>
    </location>
</feature>
<feature type="active site" description="Acyl-thioester intermediate" evidence="1">
    <location>
        <position position="174"/>
    </location>
</feature>
<feature type="binding site" evidence="1">
    <location>
        <begin position="69"/>
        <end position="76"/>
    </location>
    <ligand>
        <name>substrate</name>
    </ligand>
</feature>
<feature type="binding site" evidence="1">
    <location>
        <begin position="143"/>
        <end position="145"/>
    </location>
    <ligand>
        <name>substrate</name>
    </ligand>
</feature>
<feature type="binding site" evidence="1">
    <location>
        <begin position="156"/>
        <end position="158"/>
    </location>
    <ligand>
        <name>substrate</name>
    </ligand>
</feature>
<feature type="site" description="Lowers pKa of active site Cys" evidence="1">
    <location>
        <position position="140"/>
    </location>
</feature>
<protein>
    <recommendedName>
        <fullName evidence="1">Octanoyltransferase</fullName>
        <ecNumber evidence="1">2.3.1.181</ecNumber>
    </recommendedName>
    <alternativeName>
        <fullName evidence="1">Lipoate-protein ligase B</fullName>
    </alternativeName>
    <alternativeName>
        <fullName evidence="1">Lipoyl/octanoyl transferase</fullName>
    </alternativeName>
    <alternativeName>
        <fullName evidence="1">Octanoyl-[acyl-carrier-protein]-protein N-octanoyltransferase</fullName>
    </alternativeName>
</protein>
<proteinExistence type="inferred from homology"/>
<reference key="1">
    <citation type="journal article" date="2009" name="BMC Genomics">
        <title>Analysis of the Rickettsia africae genome reveals that virulence acquisition in Rickettsia species may be explained by genome reduction.</title>
        <authorList>
            <person name="Fournier P.-E."/>
            <person name="El Karkouri K."/>
            <person name="Leroy Q."/>
            <person name="Robert C."/>
            <person name="Giumelli B."/>
            <person name="Renesto P."/>
            <person name="Socolovschi C."/>
            <person name="Parola P."/>
            <person name="Audic S."/>
            <person name="Raoult D."/>
        </authorList>
    </citation>
    <scope>NUCLEOTIDE SEQUENCE [LARGE SCALE GENOMIC DNA]</scope>
    <source>
        <strain>ESF-5</strain>
    </source>
</reference>
<evidence type="ECO:0000255" key="1">
    <source>
        <dbReference type="HAMAP-Rule" id="MF_00013"/>
    </source>
</evidence>
<evidence type="ECO:0000255" key="2">
    <source>
        <dbReference type="PROSITE-ProRule" id="PRU01067"/>
    </source>
</evidence>
<name>LIPB_RICAE</name>
<organism>
    <name type="scientific">Rickettsia africae (strain ESF-5)</name>
    <dbReference type="NCBI Taxonomy" id="347255"/>
    <lineage>
        <taxon>Bacteria</taxon>
        <taxon>Pseudomonadati</taxon>
        <taxon>Pseudomonadota</taxon>
        <taxon>Alphaproteobacteria</taxon>
        <taxon>Rickettsiales</taxon>
        <taxon>Rickettsiaceae</taxon>
        <taxon>Rickettsieae</taxon>
        <taxon>Rickettsia</taxon>
        <taxon>spotted fever group</taxon>
    </lineage>
</organism>
<gene>
    <name evidence="1" type="primary">lipB</name>
    <name type="ordered locus">RAF_ORF1243</name>
</gene>